<feature type="chain" id="PRO_1000020921" description="Protease HtpX homolog">
    <location>
        <begin position="1"/>
        <end position="318"/>
    </location>
</feature>
<feature type="transmembrane region" description="Helical" evidence="1">
    <location>
        <begin position="6"/>
        <end position="26"/>
    </location>
</feature>
<feature type="transmembrane region" description="Helical" evidence="1">
    <location>
        <begin position="28"/>
        <end position="48"/>
    </location>
</feature>
<feature type="transmembrane region" description="Helical" evidence="1">
    <location>
        <begin position="145"/>
        <end position="165"/>
    </location>
</feature>
<feature type="transmembrane region" description="Helical" evidence="1">
    <location>
        <begin position="173"/>
        <end position="193"/>
    </location>
</feature>
<feature type="region of interest" description="Disordered" evidence="2">
    <location>
        <begin position="284"/>
        <end position="318"/>
    </location>
</feature>
<feature type="active site" evidence="1">
    <location>
        <position position="131"/>
    </location>
</feature>
<feature type="binding site" evidence="1">
    <location>
        <position position="130"/>
    </location>
    <ligand>
        <name>Zn(2+)</name>
        <dbReference type="ChEBI" id="CHEBI:29105"/>
        <note>catalytic</note>
    </ligand>
</feature>
<feature type="binding site" evidence="1">
    <location>
        <position position="134"/>
    </location>
    <ligand>
        <name>Zn(2+)</name>
        <dbReference type="ChEBI" id="CHEBI:29105"/>
        <note>catalytic</note>
    </ligand>
</feature>
<feature type="binding site" evidence="1">
    <location>
        <position position="202"/>
    </location>
    <ligand>
        <name>Zn(2+)</name>
        <dbReference type="ChEBI" id="CHEBI:29105"/>
        <note>catalytic</note>
    </ligand>
</feature>
<keyword id="KW-0997">Cell inner membrane</keyword>
<keyword id="KW-1003">Cell membrane</keyword>
<keyword id="KW-0378">Hydrolase</keyword>
<keyword id="KW-0472">Membrane</keyword>
<keyword id="KW-0479">Metal-binding</keyword>
<keyword id="KW-0482">Metalloprotease</keyword>
<keyword id="KW-0645">Protease</keyword>
<keyword id="KW-1185">Reference proteome</keyword>
<keyword id="KW-0812">Transmembrane</keyword>
<keyword id="KW-1133">Transmembrane helix</keyword>
<keyword id="KW-0862">Zinc</keyword>
<comment type="cofactor">
    <cofactor evidence="1">
        <name>Zn(2+)</name>
        <dbReference type="ChEBI" id="CHEBI:29105"/>
    </cofactor>
    <text evidence="1">Binds 1 zinc ion per subunit.</text>
</comment>
<comment type="subcellular location">
    <subcellularLocation>
        <location evidence="1">Cell inner membrane</location>
        <topology evidence="1">Multi-pass membrane protein</topology>
    </subcellularLocation>
</comment>
<comment type="similarity">
    <text evidence="1">Belongs to the peptidase M48B family.</text>
</comment>
<proteinExistence type="inferred from homology"/>
<organism>
    <name type="scientific">Rhizobium etli (strain ATCC 51251 / DSM 11541 / JCM 21823 / NBRC 15573 / CFN 42)</name>
    <dbReference type="NCBI Taxonomy" id="347834"/>
    <lineage>
        <taxon>Bacteria</taxon>
        <taxon>Pseudomonadati</taxon>
        <taxon>Pseudomonadota</taxon>
        <taxon>Alphaproteobacteria</taxon>
        <taxon>Hyphomicrobiales</taxon>
        <taxon>Rhizobiaceae</taxon>
        <taxon>Rhizobium/Agrobacterium group</taxon>
        <taxon>Rhizobium</taxon>
    </lineage>
</organism>
<protein>
    <recommendedName>
        <fullName evidence="1">Protease HtpX homolog</fullName>
        <ecNumber evidence="1">3.4.24.-</ecNumber>
    </recommendedName>
</protein>
<accession>Q2K2T3</accession>
<sequence>MNLVRTAMLLAFMTALFMFVGFLIGGRGGMMIAFLIAAGMNFFSYWNSDRMVLAAYRAHEIDERNAPEFFAIVRDLARNAGLPMPKVYLYDSPQPNAFATGRNPENAAVAASTGLLQALSPEEVAGVMAHELAHIQNRDTLTMTITATLAGAISMLGNFAFFFGGNRDNNNNPLGFVGVLVAMIVAPLAAMLVQMAISRTREYSADRRGAEICGNPLWLASALGKIARGAAHVPNEDAERNPATAHMFIINPLSGERMDNLFSTHPDTENRIAALQEMAQSGMNVSTGPVRAVNPTRKSRSVPNTGRGGSQPPRGPWS</sequence>
<gene>
    <name evidence="1" type="primary">htpX</name>
    <name type="ordered locus">RHE_CH04110</name>
</gene>
<evidence type="ECO:0000255" key="1">
    <source>
        <dbReference type="HAMAP-Rule" id="MF_00188"/>
    </source>
</evidence>
<evidence type="ECO:0000256" key="2">
    <source>
        <dbReference type="SAM" id="MobiDB-lite"/>
    </source>
</evidence>
<name>HTPX_RHIEC</name>
<dbReference type="EC" id="3.4.24.-" evidence="1"/>
<dbReference type="EMBL" id="CP000133">
    <property type="protein sequence ID" value="ABC92853.1"/>
    <property type="molecule type" value="Genomic_DNA"/>
</dbReference>
<dbReference type="RefSeq" id="WP_011427291.1">
    <property type="nucleotide sequence ID" value="NC_007761.1"/>
</dbReference>
<dbReference type="KEGG" id="ret:RHE_CH04110"/>
<dbReference type="eggNOG" id="COG0501">
    <property type="taxonomic scope" value="Bacteria"/>
</dbReference>
<dbReference type="HOGENOM" id="CLU_042266_3_0_5"/>
<dbReference type="OrthoDB" id="15218at2"/>
<dbReference type="Proteomes" id="UP000001936">
    <property type="component" value="Chromosome"/>
</dbReference>
<dbReference type="GO" id="GO:0005886">
    <property type="term" value="C:plasma membrane"/>
    <property type="evidence" value="ECO:0007669"/>
    <property type="project" value="UniProtKB-SubCell"/>
</dbReference>
<dbReference type="GO" id="GO:0004222">
    <property type="term" value="F:metalloendopeptidase activity"/>
    <property type="evidence" value="ECO:0007669"/>
    <property type="project" value="UniProtKB-UniRule"/>
</dbReference>
<dbReference type="GO" id="GO:0008270">
    <property type="term" value="F:zinc ion binding"/>
    <property type="evidence" value="ECO:0007669"/>
    <property type="project" value="UniProtKB-UniRule"/>
</dbReference>
<dbReference type="GO" id="GO:0006508">
    <property type="term" value="P:proteolysis"/>
    <property type="evidence" value="ECO:0007669"/>
    <property type="project" value="UniProtKB-KW"/>
</dbReference>
<dbReference type="CDD" id="cd07336">
    <property type="entry name" value="M48B_HtpX_like"/>
    <property type="match status" value="1"/>
</dbReference>
<dbReference type="Gene3D" id="3.30.2010.10">
    <property type="entry name" value="Metalloproteases ('zincins'), catalytic domain"/>
    <property type="match status" value="1"/>
</dbReference>
<dbReference type="HAMAP" id="MF_00188">
    <property type="entry name" value="Pept_M48_protease_HtpX"/>
    <property type="match status" value="1"/>
</dbReference>
<dbReference type="InterPro" id="IPR050083">
    <property type="entry name" value="HtpX_protease"/>
</dbReference>
<dbReference type="InterPro" id="IPR022919">
    <property type="entry name" value="Pept_M48_protease_HtpX"/>
</dbReference>
<dbReference type="InterPro" id="IPR001915">
    <property type="entry name" value="Peptidase_M48"/>
</dbReference>
<dbReference type="NCBIfam" id="NF002363">
    <property type="entry name" value="PRK01345.1"/>
    <property type="match status" value="1"/>
</dbReference>
<dbReference type="NCBIfam" id="NF002826">
    <property type="entry name" value="PRK03001.1"/>
    <property type="match status" value="1"/>
</dbReference>
<dbReference type="PANTHER" id="PTHR43221">
    <property type="entry name" value="PROTEASE HTPX"/>
    <property type="match status" value="1"/>
</dbReference>
<dbReference type="PANTHER" id="PTHR43221:SF1">
    <property type="entry name" value="PROTEASE HTPX"/>
    <property type="match status" value="1"/>
</dbReference>
<dbReference type="Pfam" id="PF01435">
    <property type="entry name" value="Peptidase_M48"/>
    <property type="match status" value="1"/>
</dbReference>
<dbReference type="PROSITE" id="PS00142">
    <property type="entry name" value="ZINC_PROTEASE"/>
    <property type="match status" value="1"/>
</dbReference>
<reference key="1">
    <citation type="journal article" date="2006" name="Proc. Natl. Acad. Sci. U.S.A.">
        <title>The partitioned Rhizobium etli genome: genetic and metabolic redundancy in seven interacting replicons.</title>
        <authorList>
            <person name="Gonzalez V."/>
            <person name="Santamaria R.I."/>
            <person name="Bustos P."/>
            <person name="Hernandez-Gonzalez I."/>
            <person name="Medrano-Soto A."/>
            <person name="Moreno-Hagelsieb G."/>
            <person name="Janga S.C."/>
            <person name="Ramirez M.A."/>
            <person name="Jimenez-Jacinto V."/>
            <person name="Collado-Vides J."/>
            <person name="Davila G."/>
        </authorList>
    </citation>
    <scope>NUCLEOTIDE SEQUENCE [LARGE SCALE GENOMIC DNA]</scope>
    <source>
        <strain>ATCC 51251 / DSM 11541 / JCM 21823 / NBRC 15573 / CFN 42</strain>
    </source>
</reference>